<dbReference type="EC" id="1.2.1.27" evidence="1"/>
<dbReference type="EMBL" id="BA000043">
    <property type="protein sequence ID" value="BAD76236.1"/>
    <property type="status" value="ALT_INIT"/>
    <property type="molecule type" value="Genomic_DNA"/>
</dbReference>
<dbReference type="RefSeq" id="WP_011231437.1">
    <property type="nucleotide sequence ID" value="NC_006510.1"/>
</dbReference>
<dbReference type="SMR" id="Q5KYK0"/>
<dbReference type="STRING" id="235909.GK1951"/>
<dbReference type="KEGG" id="gka:GK1951"/>
<dbReference type="eggNOG" id="COG1012">
    <property type="taxonomic scope" value="Bacteria"/>
</dbReference>
<dbReference type="HOGENOM" id="CLU_005391_1_10_9"/>
<dbReference type="UniPathway" id="UPA00076">
    <property type="reaction ID" value="UER00148"/>
</dbReference>
<dbReference type="Proteomes" id="UP000001172">
    <property type="component" value="Chromosome"/>
</dbReference>
<dbReference type="GO" id="GO:0018478">
    <property type="term" value="F:malonate-semialdehyde dehydrogenase (acetylating) activity"/>
    <property type="evidence" value="ECO:0007669"/>
    <property type="project" value="UniProtKB-UniRule"/>
</dbReference>
<dbReference type="GO" id="GO:0004491">
    <property type="term" value="F:methylmalonate-semialdehyde dehydrogenase (acylating, NAD) activity"/>
    <property type="evidence" value="ECO:0007669"/>
    <property type="project" value="UniProtKB-UniRule"/>
</dbReference>
<dbReference type="GO" id="GO:0019310">
    <property type="term" value="P:inositol catabolic process"/>
    <property type="evidence" value="ECO:0007669"/>
    <property type="project" value="UniProtKB-UniRule"/>
</dbReference>
<dbReference type="GO" id="GO:0006210">
    <property type="term" value="P:thymine catabolic process"/>
    <property type="evidence" value="ECO:0007669"/>
    <property type="project" value="TreeGrafter"/>
</dbReference>
<dbReference type="GO" id="GO:0006574">
    <property type="term" value="P:valine catabolic process"/>
    <property type="evidence" value="ECO:0007669"/>
    <property type="project" value="TreeGrafter"/>
</dbReference>
<dbReference type="CDD" id="cd07085">
    <property type="entry name" value="ALDH_F6_MMSDH"/>
    <property type="match status" value="1"/>
</dbReference>
<dbReference type="FunFam" id="3.40.309.10:FF:000002">
    <property type="entry name" value="Methylmalonate-semialdehyde dehydrogenase (Acylating)"/>
    <property type="match status" value="1"/>
</dbReference>
<dbReference type="FunFam" id="3.40.605.10:FF:000003">
    <property type="entry name" value="Methylmalonate-semialdehyde dehydrogenase [acylating]"/>
    <property type="match status" value="1"/>
</dbReference>
<dbReference type="Gene3D" id="3.40.605.10">
    <property type="entry name" value="Aldehyde Dehydrogenase, Chain A, domain 1"/>
    <property type="match status" value="1"/>
</dbReference>
<dbReference type="Gene3D" id="3.40.309.10">
    <property type="entry name" value="Aldehyde Dehydrogenase, Chain A, domain 2"/>
    <property type="match status" value="1"/>
</dbReference>
<dbReference type="HAMAP" id="MF_01670">
    <property type="entry name" value="IolA"/>
    <property type="match status" value="1"/>
</dbReference>
<dbReference type="InterPro" id="IPR016161">
    <property type="entry name" value="Ald_DH/histidinol_DH"/>
</dbReference>
<dbReference type="InterPro" id="IPR016163">
    <property type="entry name" value="Ald_DH_C"/>
</dbReference>
<dbReference type="InterPro" id="IPR016160">
    <property type="entry name" value="Ald_DH_CS_CYS"/>
</dbReference>
<dbReference type="InterPro" id="IPR016162">
    <property type="entry name" value="Ald_DH_N"/>
</dbReference>
<dbReference type="InterPro" id="IPR015590">
    <property type="entry name" value="Aldehyde_DH_dom"/>
</dbReference>
<dbReference type="InterPro" id="IPR010061">
    <property type="entry name" value="MeMal-semiAld_DH"/>
</dbReference>
<dbReference type="InterPro" id="IPR023510">
    <property type="entry name" value="MSDH_GmP_bac"/>
</dbReference>
<dbReference type="NCBIfam" id="TIGR01722">
    <property type="entry name" value="MMSDH"/>
    <property type="match status" value="1"/>
</dbReference>
<dbReference type="PANTHER" id="PTHR43866">
    <property type="entry name" value="MALONATE-SEMIALDEHYDE DEHYDROGENASE"/>
    <property type="match status" value="1"/>
</dbReference>
<dbReference type="PANTHER" id="PTHR43866:SF4">
    <property type="entry name" value="MALONATE-SEMIALDEHYDE DEHYDROGENASE"/>
    <property type="match status" value="1"/>
</dbReference>
<dbReference type="Pfam" id="PF00171">
    <property type="entry name" value="Aldedh"/>
    <property type="match status" value="1"/>
</dbReference>
<dbReference type="SUPFAM" id="SSF53720">
    <property type="entry name" value="ALDH-like"/>
    <property type="match status" value="1"/>
</dbReference>
<dbReference type="PROSITE" id="PS00070">
    <property type="entry name" value="ALDEHYDE_DEHYDR_CYS"/>
    <property type="match status" value="1"/>
</dbReference>
<evidence type="ECO:0000255" key="1">
    <source>
        <dbReference type="HAMAP-Rule" id="MF_01670"/>
    </source>
</evidence>
<evidence type="ECO:0000305" key="2"/>
<organism>
    <name type="scientific">Geobacillus kaustophilus (strain HTA426)</name>
    <dbReference type="NCBI Taxonomy" id="235909"/>
    <lineage>
        <taxon>Bacteria</taxon>
        <taxon>Bacillati</taxon>
        <taxon>Bacillota</taxon>
        <taxon>Bacilli</taxon>
        <taxon>Bacillales</taxon>
        <taxon>Anoxybacillaceae</taxon>
        <taxon>Geobacillus</taxon>
        <taxon>Geobacillus thermoleovorans group</taxon>
    </lineage>
</organism>
<gene>
    <name evidence="1" type="primary">iolA3</name>
    <name type="ordered locus">GK1951</name>
</gene>
<keyword id="KW-0520">NAD</keyword>
<keyword id="KW-0560">Oxidoreductase</keyword>
<keyword id="KW-1185">Reference proteome</keyword>
<proteinExistence type="inferred from homology"/>
<accession>Q5KYK0</accession>
<sequence length="484" mass="52987">MTETKTLKNFIGGQWVASTSGKEEVVPNPATGEVLAKVPLSSREELDAAVAAAKEAFREWRKVPVPRRARILFRYQQLLVEHWDELARLVTLENGKVYEDAYGEVQRGIECVEFAAGIPTLMMGQQLPDIATDIESGMYRYPLGVVAGITPFNFPMMVPCWMFPLAIACGNTFVLKPSERTPMLANRLAELFTEAGLPPGVLNIVHGAHEVVGGILEHKDIKAVSFVGSQPVAEYVYKTAAAHGKRVQALAGAKNHSIVMPDADLDMAVTNIINAAFGSAGERCMACSVVVAVGDIADELVRRLKEAADRIQIGNGLDKGVFLGPVIRESHKERTIKYIEIGEKEGALLVRDGRRDSATSGQGYFIGPTIFDHVKPGMTIWTDEIFAPVLSVVRARDLDEAIEIANRSEFANGACIYTDSAKAIRQFREEIDAGMLGVNVAVPAPMAFFPFSGYKNSFYGDLHANGRDGVEFYTRKKMVTARYQ</sequence>
<feature type="chain" id="PRO_0000352341" description="Malonate-semialdehyde dehydrogenase 3">
    <location>
        <begin position="1"/>
        <end position="484"/>
    </location>
</feature>
<feature type="active site" description="Nucleophile" evidence="1">
    <location>
        <position position="284"/>
    </location>
</feature>
<feature type="binding site" evidence="1">
    <location>
        <position position="152"/>
    </location>
    <ligand>
        <name>NAD(+)</name>
        <dbReference type="ChEBI" id="CHEBI:57540"/>
    </ligand>
</feature>
<feature type="binding site" evidence="1">
    <location>
        <position position="176"/>
    </location>
    <ligand>
        <name>NAD(+)</name>
        <dbReference type="ChEBI" id="CHEBI:57540"/>
    </ligand>
</feature>
<feature type="binding site" evidence="1">
    <location>
        <position position="179"/>
    </location>
    <ligand>
        <name>NAD(+)</name>
        <dbReference type="ChEBI" id="CHEBI:57540"/>
    </ligand>
</feature>
<feature type="binding site" evidence="1">
    <location>
        <position position="180"/>
    </location>
    <ligand>
        <name>NAD(+)</name>
        <dbReference type="ChEBI" id="CHEBI:57540"/>
    </ligand>
</feature>
<feature type="binding site" evidence="1">
    <location>
        <position position="229"/>
    </location>
    <ligand>
        <name>NAD(+)</name>
        <dbReference type="ChEBI" id="CHEBI:57540"/>
    </ligand>
</feature>
<feature type="binding site" evidence="1">
    <location>
        <position position="384"/>
    </location>
    <ligand>
        <name>NAD(+)</name>
        <dbReference type="ChEBI" id="CHEBI:57540"/>
    </ligand>
</feature>
<comment type="function">
    <text evidence="1">Catalyzes the oxidation of malonate semialdehyde (MSA) and methylmalonate semialdehyde (MMSA) into acetyl-CoA and propanoyl-CoA, respectively. Is involved in a myo-inositol catabolic pathway. Bicarbonate, and not CO2, is the end-product of the enzymatic reaction.</text>
</comment>
<comment type="catalytic activity">
    <reaction evidence="1">
        <text>3-oxopropanoate + NAD(+) + CoA + H2O = hydrogencarbonate + acetyl-CoA + NADH + H(+)</text>
        <dbReference type="Rhea" id="RHEA:76615"/>
        <dbReference type="ChEBI" id="CHEBI:15377"/>
        <dbReference type="ChEBI" id="CHEBI:15378"/>
        <dbReference type="ChEBI" id="CHEBI:17544"/>
        <dbReference type="ChEBI" id="CHEBI:33190"/>
        <dbReference type="ChEBI" id="CHEBI:57287"/>
        <dbReference type="ChEBI" id="CHEBI:57288"/>
        <dbReference type="ChEBI" id="CHEBI:57540"/>
        <dbReference type="ChEBI" id="CHEBI:57945"/>
        <dbReference type="EC" id="1.2.1.27"/>
    </reaction>
    <physiologicalReaction direction="left-to-right" evidence="1">
        <dbReference type="Rhea" id="RHEA:76616"/>
    </physiologicalReaction>
</comment>
<comment type="catalytic activity">
    <reaction evidence="1">
        <text>2-methyl-3-oxopropanoate + NAD(+) + CoA + H2O = propanoyl-CoA + hydrogencarbonate + NADH + H(+)</text>
        <dbReference type="Rhea" id="RHEA:20804"/>
        <dbReference type="ChEBI" id="CHEBI:15377"/>
        <dbReference type="ChEBI" id="CHEBI:15378"/>
        <dbReference type="ChEBI" id="CHEBI:17544"/>
        <dbReference type="ChEBI" id="CHEBI:57287"/>
        <dbReference type="ChEBI" id="CHEBI:57392"/>
        <dbReference type="ChEBI" id="CHEBI:57540"/>
        <dbReference type="ChEBI" id="CHEBI:57700"/>
        <dbReference type="ChEBI" id="CHEBI:57945"/>
        <dbReference type="EC" id="1.2.1.27"/>
    </reaction>
    <physiologicalReaction direction="left-to-right" evidence="1">
        <dbReference type="Rhea" id="RHEA:20805"/>
    </physiologicalReaction>
</comment>
<comment type="pathway">
    <text evidence="1">Polyol metabolism; myo-inositol degradation into acetyl-CoA; acetyl-CoA from myo-inositol: step 7/7.</text>
</comment>
<comment type="subunit">
    <text evidence="1">Homotetramer.</text>
</comment>
<comment type="similarity">
    <text evidence="1">Belongs to the aldehyde dehydrogenase family. IolA subfamily.</text>
</comment>
<comment type="sequence caution" evidence="2">
    <conflict type="erroneous initiation">
        <sequence resource="EMBL-CDS" id="BAD76236"/>
    </conflict>
</comment>
<reference key="1">
    <citation type="journal article" date="2004" name="Nucleic Acids Res.">
        <title>Thermoadaptation trait revealed by the genome sequence of thermophilic Geobacillus kaustophilus.</title>
        <authorList>
            <person name="Takami H."/>
            <person name="Takaki Y."/>
            <person name="Chee G.-J."/>
            <person name="Nishi S."/>
            <person name="Shimamura S."/>
            <person name="Suzuki H."/>
            <person name="Matsui S."/>
            <person name="Uchiyama I."/>
        </authorList>
    </citation>
    <scope>NUCLEOTIDE SEQUENCE [LARGE SCALE GENOMIC DNA]</scope>
    <source>
        <strain>HTA426</strain>
    </source>
</reference>
<name>IOLA3_GEOKA</name>
<protein>
    <recommendedName>
        <fullName evidence="1">Malonate-semialdehyde dehydrogenase 3</fullName>
        <shortName evidence="1">MSA dehydrogenase 3</shortName>
        <ecNumber evidence="1">1.2.1.27</ecNumber>
    </recommendedName>
    <alternativeName>
        <fullName evidence="1">Methylmalonate-semialdehyde dehydrogenase 3</fullName>
        <shortName evidence="1">MMSA dehydrogenase 3</shortName>
        <shortName evidence="1">MSDH 3</shortName>
    </alternativeName>
</protein>